<keyword id="KW-0067">ATP-binding</keyword>
<keyword id="KW-0244">Early protein</keyword>
<keyword id="KW-1035">Host cytoplasm</keyword>
<keyword id="KW-1048">Host nucleus</keyword>
<keyword id="KW-0426">Late protein</keyword>
<keyword id="KW-0547">Nucleotide-binding</keyword>
<keyword id="KW-0808">Transferase</keyword>
<keyword id="KW-0833">Ubl conjugation pathway</keyword>
<evidence type="ECO:0000250" key="1">
    <source>
        <dbReference type="UniProtKB" id="P27949"/>
    </source>
</evidence>
<evidence type="ECO:0000255" key="2">
    <source>
        <dbReference type="PROSITE-ProRule" id="PRU00388"/>
    </source>
</evidence>
<evidence type="ECO:0000305" key="3"/>
<organismHost>
    <name type="scientific">Ornithodoros</name>
    <name type="common">relapsing fever ticks</name>
    <dbReference type="NCBI Taxonomy" id="6937"/>
</organismHost>
<organismHost>
    <name type="scientific">Phacochoerus aethiopicus</name>
    <name type="common">Warthog</name>
    <dbReference type="NCBI Taxonomy" id="85517"/>
</organismHost>
<organismHost>
    <name type="scientific">Phacochoerus africanus</name>
    <name type="common">Warthog</name>
    <dbReference type="NCBI Taxonomy" id="41426"/>
</organismHost>
<organismHost>
    <name type="scientific">Potamochoerus larvatus</name>
    <name type="common">Bushpig</name>
    <dbReference type="NCBI Taxonomy" id="273792"/>
</organismHost>
<organismHost>
    <name type="scientific">Sus scrofa</name>
    <name type="common">Pig</name>
    <dbReference type="NCBI Taxonomy" id="9823"/>
</organismHost>
<gene>
    <name type="primary">UBC</name>
    <name type="ordered locus">Ken-155</name>
</gene>
<name>UBC_ASFK5</name>
<sequence length="218" mass="25290">MVSRFLLTEYRNLTENPSEHFKVSVNENNLTEWDVILKGPSDTFYEGGLFKAKITFPPNYPYEPPKLTFTSEMWHPNIYPDGRLCISILHTDNVEERGMTWSPAQKIETVLLSVISLFNEPNTDSPANVDAAKSYRKLMHKEDLESYPMEVKKTVKKSLDECSAEDIEYFKNAVFNVPAIPSDAYEDEHEDEEMEDGTYILTYDDEDEEEEDDEMDDE</sequence>
<proteinExistence type="inferred from homology"/>
<reference key="1">
    <citation type="submission" date="2003-03" db="EMBL/GenBank/DDBJ databases">
        <title>African swine fever virus genomes.</title>
        <authorList>
            <person name="Kutish G.F."/>
            <person name="Rock D.L."/>
        </authorList>
    </citation>
    <scope>NUCLEOTIDE SEQUENCE [LARGE SCALE GENOMIC DNA]</scope>
</reference>
<dbReference type="EC" id="2.3.2.23" evidence="1"/>
<dbReference type="EMBL" id="AY261360">
    <property type="status" value="NOT_ANNOTATED_CDS"/>
    <property type="molecule type" value="Genomic_DNA"/>
</dbReference>
<dbReference type="SMR" id="P0C8G3"/>
<dbReference type="UniPathway" id="UPA00143"/>
<dbReference type="Proteomes" id="UP000000861">
    <property type="component" value="Segment"/>
</dbReference>
<dbReference type="GO" id="GO:0030430">
    <property type="term" value="C:host cell cytoplasm"/>
    <property type="evidence" value="ECO:0007669"/>
    <property type="project" value="UniProtKB-SubCell"/>
</dbReference>
<dbReference type="GO" id="GO:0042025">
    <property type="term" value="C:host cell nucleus"/>
    <property type="evidence" value="ECO:0007669"/>
    <property type="project" value="UniProtKB-SubCell"/>
</dbReference>
<dbReference type="GO" id="GO:0005524">
    <property type="term" value="F:ATP binding"/>
    <property type="evidence" value="ECO:0007669"/>
    <property type="project" value="UniProtKB-KW"/>
</dbReference>
<dbReference type="GO" id="GO:0061631">
    <property type="term" value="F:ubiquitin conjugating enzyme activity"/>
    <property type="evidence" value="ECO:0007669"/>
    <property type="project" value="UniProtKB-EC"/>
</dbReference>
<dbReference type="GO" id="GO:0016567">
    <property type="term" value="P:protein ubiquitination"/>
    <property type="evidence" value="ECO:0007669"/>
    <property type="project" value="UniProtKB-UniPathway"/>
</dbReference>
<dbReference type="FunFam" id="3.10.110.10:FF:000051">
    <property type="entry name" value="ubiquitin-conjugating enzyme E2 R2-like"/>
    <property type="match status" value="1"/>
</dbReference>
<dbReference type="Gene3D" id="3.10.110.10">
    <property type="entry name" value="Ubiquitin Conjugating Enzyme"/>
    <property type="match status" value="1"/>
</dbReference>
<dbReference type="InterPro" id="IPR050113">
    <property type="entry name" value="Ub_conjugating_enzyme"/>
</dbReference>
<dbReference type="InterPro" id="IPR000608">
    <property type="entry name" value="UBQ-conjugat_E2_core"/>
</dbReference>
<dbReference type="InterPro" id="IPR023313">
    <property type="entry name" value="UBQ-conjugating_AS"/>
</dbReference>
<dbReference type="InterPro" id="IPR016135">
    <property type="entry name" value="UBQ-conjugating_enzyme/RWD"/>
</dbReference>
<dbReference type="PANTHER" id="PTHR24067">
    <property type="entry name" value="UBIQUITIN-CONJUGATING ENZYME E2"/>
    <property type="match status" value="1"/>
</dbReference>
<dbReference type="Pfam" id="PF00179">
    <property type="entry name" value="UQ_con"/>
    <property type="match status" value="1"/>
</dbReference>
<dbReference type="SMART" id="SM00212">
    <property type="entry name" value="UBCc"/>
    <property type="match status" value="1"/>
</dbReference>
<dbReference type="SUPFAM" id="SSF54495">
    <property type="entry name" value="UBC-like"/>
    <property type="match status" value="1"/>
</dbReference>
<dbReference type="PROSITE" id="PS00183">
    <property type="entry name" value="UBC_1"/>
    <property type="match status" value="1"/>
</dbReference>
<dbReference type="PROSITE" id="PS50127">
    <property type="entry name" value="UBC_2"/>
    <property type="match status" value="1"/>
</dbReference>
<protein>
    <recommendedName>
        <fullName>Ubiquitin-conjugating enzyme E2</fullName>
        <ecNumber evidence="1">2.3.2.23</ecNumber>
    </recommendedName>
    <alternativeName>
        <fullName>E2 ubiquitin-conjugating enzyme</fullName>
    </alternativeName>
    <alternativeName>
        <fullName evidence="1">UBCv1</fullName>
    </alternativeName>
    <alternativeName>
        <fullName>Ubiquitin carrier protein</fullName>
    </alternativeName>
    <alternativeName>
        <fullName>Ubiquitin-protein ligase</fullName>
    </alternativeName>
    <alternativeName>
        <fullName evidence="1">pI215L</fullName>
    </alternativeName>
</protein>
<feature type="chain" id="PRO_0000355068" description="Ubiquitin-conjugating enzyme E2">
    <location>
        <begin position="1"/>
        <end position="218"/>
    </location>
</feature>
<feature type="domain" description="UBC core" evidence="2">
    <location>
        <begin position="1"/>
        <end position="160"/>
    </location>
</feature>
<feature type="active site" description="Glycyl thioester intermediate" evidence="2">
    <location>
        <position position="85"/>
    </location>
</feature>
<accession>P0C8G3</accession>
<comment type="function">
    <text evidence="1">Accepts ubiquitin from the E1 complex and catalyzes its covalent attachment to other proteins (By similarity). Performs the second step in the ubiquitination reaction that targets specifically a protein for degradation via the proteasome (By similarity). By controlling the ubiquitination status of specific host proteins, the virus may target them to degradation and thereby optimize the viral replication (By similarity). May be implicated in the shutoff of protein synthesis through its interactions with components of the host translation machinery (By similarity). Blocks p65 nuclear translocation upon cytokine stimulation, thereby impairing NF-kappa-B signaling (By similarity). Inhibits type I IFN production and 'Lys-63'-linked polyubiquitination of host TBK1 through binding to host RNF138. This binding enhances the interaction between RNF138 and RNF128 and promotes RNF138-mediated degradation of RNF128. Also inhibits the activation of AP-1 transcription factor (By similarity). Monoubiquitinates the viral protein P15/PIG1 in vitro (By similarity).</text>
</comment>
<comment type="catalytic activity">
    <reaction evidence="1">
        <text>S-ubiquitinyl-[E1 ubiquitin-activating enzyme]-L-cysteine + [E2 ubiquitin-conjugating enzyme]-L-cysteine = [E1 ubiquitin-activating enzyme]-L-cysteine + S-ubiquitinyl-[E2 ubiquitin-conjugating enzyme]-L-cysteine.</text>
        <dbReference type="EC" id="2.3.2.23"/>
    </reaction>
</comment>
<comment type="cofactor">
    <cofactor evidence="1">
        <name>Mg(2+)</name>
        <dbReference type="ChEBI" id="CHEBI:18420"/>
    </cofactor>
    <text evidence="1">Binds Mn2+ ion which is required for highest activity. Can also utilize Mg2+ ions.</text>
</comment>
<comment type="pathway">
    <text evidence="1 2">Protein modification; protein ubiquitination.</text>
</comment>
<comment type="subunit">
    <text evidence="1">Interacts with host 40S ribosomal protein RPS23 (By similarity). Interacts with host translation initiation factor EIF4E (By similarity). Interacts with host E3 ubiquitin ligase CUL4B (By similarity). Interacts with host RNF138 (By similarity).</text>
</comment>
<comment type="subcellular location">
    <subcellularLocation>
        <location evidence="1">Host cytoplasm</location>
    </subcellularLocation>
    <subcellularLocation>
        <location evidence="1">Host nucleus</location>
    </subcellularLocation>
    <text evidence="1">Accumulates in cytoplasmic viral factories. Faintly detected in the nucleus.</text>
</comment>
<comment type="induction">
    <text evidence="3">Expressed in the early phase of the viral replicative cycle.</text>
</comment>
<comment type="similarity">
    <text evidence="2">Belongs to the ubiquitin-conjugating enzyme family.</text>
</comment>
<organism>
    <name type="scientific">African swine fever virus (isolate Pig/Kenya/KEN-50/1950)</name>
    <name type="common">ASFV</name>
    <dbReference type="NCBI Taxonomy" id="561445"/>
    <lineage>
        <taxon>Viruses</taxon>
        <taxon>Varidnaviria</taxon>
        <taxon>Bamfordvirae</taxon>
        <taxon>Nucleocytoviricota</taxon>
        <taxon>Pokkesviricetes</taxon>
        <taxon>Asfuvirales</taxon>
        <taxon>Asfarviridae</taxon>
        <taxon>Asfivirus</taxon>
        <taxon>African swine fever virus</taxon>
    </lineage>
</organism>